<organism>
    <name type="scientific">Staphylococcus aureus (strain Mu50 / ATCC 700699)</name>
    <dbReference type="NCBI Taxonomy" id="158878"/>
    <lineage>
        <taxon>Bacteria</taxon>
        <taxon>Bacillati</taxon>
        <taxon>Bacillota</taxon>
        <taxon>Bacilli</taxon>
        <taxon>Bacillales</taxon>
        <taxon>Staphylococcaceae</taxon>
        <taxon>Staphylococcus</taxon>
    </lineage>
</organism>
<name>QOX4_STAAM</name>
<dbReference type="EC" id="1.10.3.-"/>
<dbReference type="EMBL" id="BA000017">
    <property type="protein sequence ID" value="BAB57220.1"/>
    <property type="molecule type" value="Genomic_DNA"/>
</dbReference>
<dbReference type="SMR" id="Q99V39"/>
<dbReference type="KEGG" id="sav:SAV1058"/>
<dbReference type="HOGENOM" id="CLU_140945_2_0_9"/>
<dbReference type="PhylomeDB" id="Q99V39"/>
<dbReference type="Proteomes" id="UP000002481">
    <property type="component" value="Chromosome"/>
</dbReference>
<dbReference type="GO" id="GO:0009319">
    <property type="term" value="C:cytochrome o ubiquinol oxidase complex"/>
    <property type="evidence" value="ECO:0007669"/>
    <property type="project" value="TreeGrafter"/>
</dbReference>
<dbReference type="GO" id="GO:0005886">
    <property type="term" value="C:plasma membrane"/>
    <property type="evidence" value="ECO:0007669"/>
    <property type="project" value="UniProtKB-SubCell"/>
</dbReference>
<dbReference type="GO" id="GO:0009486">
    <property type="term" value="F:cytochrome bo3 ubiquinol oxidase activity"/>
    <property type="evidence" value="ECO:0007669"/>
    <property type="project" value="TreeGrafter"/>
</dbReference>
<dbReference type="GO" id="GO:0016682">
    <property type="term" value="F:oxidoreductase activity, acting on diphenols and related substances as donors, oxygen as acceptor"/>
    <property type="evidence" value="ECO:0007669"/>
    <property type="project" value="InterPro"/>
</dbReference>
<dbReference type="GO" id="GO:0015078">
    <property type="term" value="F:proton transmembrane transporter activity"/>
    <property type="evidence" value="ECO:0007669"/>
    <property type="project" value="TreeGrafter"/>
</dbReference>
<dbReference type="GO" id="GO:0019646">
    <property type="term" value="P:aerobic electron transport chain"/>
    <property type="evidence" value="ECO:0007669"/>
    <property type="project" value="TreeGrafter"/>
</dbReference>
<dbReference type="GO" id="GO:0042773">
    <property type="term" value="P:ATP synthesis coupled electron transport"/>
    <property type="evidence" value="ECO:0007669"/>
    <property type="project" value="InterPro"/>
</dbReference>
<dbReference type="GO" id="GO:0015990">
    <property type="term" value="P:electron transport coupled proton transport"/>
    <property type="evidence" value="ECO:0007669"/>
    <property type="project" value="TreeGrafter"/>
</dbReference>
<dbReference type="InterPro" id="IPR005171">
    <property type="entry name" value="Cyt_c_oxidase_su4_prok"/>
</dbReference>
<dbReference type="InterPro" id="IPR050968">
    <property type="entry name" value="Cytochrome_c_oxidase_bac_sub4"/>
</dbReference>
<dbReference type="InterPro" id="IPR014250">
    <property type="entry name" value="QoxD"/>
</dbReference>
<dbReference type="NCBIfam" id="TIGR02901">
    <property type="entry name" value="QoxD"/>
    <property type="match status" value="1"/>
</dbReference>
<dbReference type="PANTHER" id="PTHR36835">
    <property type="entry name" value="CYTOCHROME BO(3) UBIQUINOL OXIDASE SUBUNIT 4"/>
    <property type="match status" value="1"/>
</dbReference>
<dbReference type="PANTHER" id="PTHR36835:SF1">
    <property type="entry name" value="CYTOCHROME BO(3) UBIQUINOL OXIDASE SUBUNIT 4"/>
    <property type="match status" value="1"/>
</dbReference>
<dbReference type="Pfam" id="PF03626">
    <property type="entry name" value="COX4_pro"/>
    <property type="match status" value="1"/>
</dbReference>
<feature type="chain" id="PRO_0000275861" description="Probable quinol oxidase subunit 4">
    <location>
        <begin position="1"/>
        <end position="96"/>
    </location>
</feature>
<feature type="transmembrane region" description="Helical" evidence="2">
    <location>
        <begin position="8"/>
        <end position="28"/>
    </location>
</feature>
<feature type="transmembrane region" description="Helical" evidence="2">
    <location>
        <begin position="36"/>
        <end position="56"/>
    </location>
</feature>
<feature type="transmembrane region" description="Helical" evidence="2">
    <location>
        <begin position="68"/>
        <end position="88"/>
    </location>
</feature>
<protein>
    <recommendedName>
        <fullName>Probable quinol oxidase subunit 4</fullName>
        <ecNumber>1.10.3.-</ecNumber>
    </recommendedName>
    <alternativeName>
        <fullName>Quinol oxidase polypeptide IV</fullName>
    </alternativeName>
</protein>
<keyword id="KW-1003">Cell membrane</keyword>
<keyword id="KW-0472">Membrane</keyword>
<keyword id="KW-0560">Oxidoreductase</keyword>
<keyword id="KW-0812">Transmembrane</keyword>
<keyword id="KW-1133">Transmembrane helix</keyword>
<evidence type="ECO:0000250" key="1"/>
<evidence type="ECO:0000255" key="2"/>
<evidence type="ECO:0000305" key="3"/>
<comment type="function">
    <text evidence="1">Catalyzes quinol oxidation with the concomitant reduction of oxygen to water.</text>
</comment>
<comment type="catalytic activity">
    <reaction>
        <text>2 a quinol + O2 = 2 a quinone + 2 H2O</text>
        <dbReference type="Rhea" id="RHEA:55376"/>
        <dbReference type="ChEBI" id="CHEBI:15377"/>
        <dbReference type="ChEBI" id="CHEBI:15379"/>
        <dbReference type="ChEBI" id="CHEBI:24646"/>
        <dbReference type="ChEBI" id="CHEBI:132124"/>
    </reaction>
</comment>
<comment type="subcellular location">
    <subcellularLocation>
        <location evidence="1">Cell membrane</location>
        <topology evidence="1">Multi-pass membrane protein</topology>
    </subcellularLocation>
</comment>
<comment type="similarity">
    <text evidence="3">Belongs to the cytochrome c oxidase bacterial subunit 4 family.</text>
</comment>
<sequence>MSTIMKHTVGFIASIVLTLLAVYVTLYTSLTFHAKLTIIFGFAFVQAGLQLLMFMHLTEGKDGRLQTFKVIFALVITLCFVVGTYWVMQGGHSSHL</sequence>
<accession>Q99V39</accession>
<gene>
    <name type="primary">qoxD</name>
    <name type="ordered locus">SAV1058</name>
</gene>
<proteinExistence type="inferred from homology"/>
<reference key="1">
    <citation type="journal article" date="2001" name="Lancet">
        <title>Whole genome sequencing of meticillin-resistant Staphylococcus aureus.</title>
        <authorList>
            <person name="Kuroda M."/>
            <person name="Ohta T."/>
            <person name="Uchiyama I."/>
            <person name="Baba T."/>
            <person name="Yuzawa H."/>
            <person name="Kobayashi I."/>
            <person name="Cui L."/>
            <person name="Oguchi A."/>
            <person name="Aoki K."/>
            <person name="Nagai Y."/>
            <person name="Lian J.-Q."/>
            <person name="Ito T."/>
            <person name="Kanamori M."/>
            <person name="Matsumaru H."/>
            <person name="Maruyama A."/>
            <person name="Murakami H."/>
            <person name="Hosoyama A."/>
            <person name="Mizutani-Ui Y."/>
            <person name="Takahashi N.K."/>
            <person name="Sawano T."/>
            <person name="Inoue R."/>
            <person name="Kaito C."/>
            <person name="Sekimizu K."/>
            <person name="Hirakawa H."/>
            <person name="Kuhara S."/>
            <person name="Goto S."/>
            <person name="Yabuzaki J."/>
            <person name="Kanehisa M."/>
            <person name="Yamashita A."/>
            <person name="Oshima K."/>
            <person name="Furuya K."/>
            <person name="Yoshino C."/>
            <person name="Shiba T."/>
            <person name="Hattori M."/>
            <person name="Ogasawara N."/>
            <person name="Hayashi H."/>
            <person name="Hiramatsu K."/>
        </authorList>
    </citation>
    <scope>NUCLEOTIDE SEQUENCE [LARGE SCALE GENOMIC DNA]</scope>
    <source>
        <strain>Mu50 / ATCC 700699</strain>
    </source>
</reference>